<gene>
    <name type="ordered locus">At4g13780</name>
    <name type="ORF">F18A5.170</name>
</gene>
<protein>
    <recommendedName>
        <fullName evidence="4">Methionine--tRNA ligase, cytoplasmic</fullName>
        <ecNumber evidence="4">6.1.1.10</ecNumber>
    </recommendedName>
    <alternativeName>
        <fullName evidence="4">Methionyl-tRNA synthetase</fullName>
        <shortName evidence="4">MetRS</shortName>
    </alternativeName>
</protein>
<dbReference type="EC" id="6.1.1.10" evidence="4"/>
<dbReference type="EMBL" id="AL035528">
    <property type="protein sequence ID" value="CAB36842.1"/>
    <property type="molecule type" value="Genomic_DNA"/>
</dbReference>
<dbReference type="EMBL" id="AL161537">
    <property type="protein sequence ID" value="CAB78420.1"/>
    <property type="molecule type" value="Genomic_DNA"/>
</dbReference>
<dbReference type="EMBL" id="CP002687">
    <property type="protein sequence ID" value="AEE83324.1"/>
    <property type="molecule type" value="Genomic_DNA"/>
</dbReference>
<dbReference type="EMBL" id="AY064009">
    <property type="protein sequence ID" value="AAL36365.1"/>
    <property type="molecule type" value="mRNA"/>
</dbReference>
<dbReference type="EMBL" id="AY091454">
    <property type="protein sequence ID" value="AAM14393.1"/>
    <property type="molecule type" value="mRNA"/>
</dbReference>
<dbReference type="PIR" id="T05247">
    <property type="entry name" value="T05247"/>
</dbReference>
<dbReference type="RefSeq" id="NP_193114.1">
    <property type="nucleotide sequence ID" value="NM_117452.5"/>
</dbReference>
<dbReference type="SMR" id="Q9SVN5"/>
<dbReference type="BioGRID" id="12309">
    <property type="interactions" value="16"/>
</dbReference>
<dbReference type="FunCoup" id="Q9SVN5">
    <property type="interactions" value="4959"/>
</dbReference>
<dbReference type="STRING" id="3702.Q9SVN5"/>
<dbReference type="iPTMnet" id="Q9SVN5"/>
<dbReference type="PaxDb" id="3702-AT4G13780.1"/>
<dbReference type="ProteomicsDB" id="233043"/>
<dbReference type="EnsemblPlants" id="AT4G13780.1">
    <property type="protein sequence ID" value="AT4G13780.1"/>
    <property type="gene ID" value="AT4G13780"/>
</dbReference>
<dbReference type="GeneID" id="827012"/>
<dbReference type="Gramene" id="AT4G13780.1">
    <property type="protein sequence ID" value="AT4G13780.1"/>
    <property type="gene ID" value="AT4G13780"/>
</dbReference>
<dbReference type="KEGG" id="ath:AT4G13780"/>
<dbReference type="Araport" id="AT4G13780"/>
<dbReference type="TAIR" id="AT4G13780"/>
<dbReference type="eggNOG" id="KOG1247">
    <property type="taxonomic scope" value="Eukaryota"/>
</dbReference>
<dbReference type="eggNOG" id="KOG2241">
    <property type="taxonomic scope" value="Eukaryota"/>
</dbReference>
<dbReference type="HOGENOM" id="CLU_009710_1_0_1"/>
<dbReference type="InParanoid" id="Q9SVN5"/>
<dbReference type="OMA" id="HLNTTEY"/>
<dbReference type="PhylomeDB" id="Q9SVN5"/>
<dbReference type="PRO" id="PR:Q9SVN5"/>
<dbReference type="Proteomes" id="UP000006548">
    <property type="component" value="Chromosome 4"/>
</dbReference>
<dbReference type="ExpressionAtlas" id="Q9SVN5">
    <property type="expression patterns" value="baseline and differential"/>
</dbReference>
<dbReference type="GO" id="GO:0005829">
    <property type="term" value="C:cytosol"/>
    <property type="evidence" value="ECO:0007005"/>
    <property type="project" value="TAIR"/>
</dbReference>
<dbReference type="GO" id="GO:0005524">
    <property type="term" value="F:ATP binding"/>
    <property type="evidence" value="ECO:0007669"/>
    <property type="project" value="UniProtKB-KW"/>
</dbReference>
<dbReference type="GO" id="GO:0004825">
    <property type="term" value="F:methionine-tRNA ligase activity"/>
    <property type="evidence" value="ECO:0007669"/>
    <property type="project" value="UniProtKB-EC"/>
</dbReference>
<dbReference type="GO" id="GO:0000049">
    <property type="term" value="F:tRNA binding"/>
    <property type="evidence" value="ECO:0007669"/>
    <property type="project" value="UniProtKB-KW"/>
</dbReference>
<dbReference type="GO" id="GO:0006431">
    <property type="term" value="P:methionyl-tRNA aminoacylation"/>
    <property type="evidence" value="ECO:0007669"/>
    <property type="project" value="InterPro"/>
</dbReference>
<dbReference type="GO" id="GO:0009791">
    <property type="term" value="P:post-embryonic development"/>
    <property type="evidence" value="ECO:0007669"/>
    <property type="project" value="UniProtKB-ARBA"/>
</dbReference>
<dbReference type="GO" id="GO:0048608">
    <property type="term" value="P:reproductive structure development"/>
    <property type="evidence" value="ECO:0007669"/>
    <property type="project" value="UniProtKB-ARBA"/>
</dbReference>
<dbReference type="CDD" id="cd07957">
    <property type="entry name" value="Anticodon_Ia_Met"/>
    <property type="match status" value="1"/>
</dbReference>
<dbReference type="CDD" id="cd00814">
    <property type="entry name" value="MetRS_core"/>
    <property type="match status" value="1"/>
</dbReference>
<dbReference type="CDD" id="cd02799">
    <property type="entry name" value="tRNA_bind_EMAP-II_like"/>
    <property type="match status" value="1"/>
</dbReference>
<dbReference type="FunFam" id="2.20.28.20:FF:000001">
    <property type="entry name" value="Methionine--tRNA ligase"/>
    <property type="match status" value="1"/>
</dbReference>
<dbReference type="FunFam" id="1.10.730.10:FF:000024">
    <property type="entry name" value="Methionine--tRNA ligase cytoplasmic"/>
    <property type="match status" value="1"/>
</dbReference>
<dbReference type="FunFam" id="2.40.50.140:FF:000047">
    <property type="entry name" value="tyrosine--tRNA ligase, cytoplasmic isoform X2"/>
    <property type="match status" value="1"/>
</dbReference>
<dbReference type="Gene3D" id="3.40.50.620">
    <property type="entry name" value="HUPs"/>
    <property type="match status" value="1"/>
</dbReference>
<dbReference type="Gene3D" id="1.10.730.10">
    <property type="entry name" value="Isoleucyl-tRNA Synthetase, Domain 1"/>
    <property type="match status" value="1"/>
</dbReference>
<dbReference type="Gene3D" id="2.20.28.20">
    <property type="entry name" value="Methionyl-tRNA synthetase, Zn-domain"/>
    <property type="match status" value="1"/>
</dbReference>
<dbReference type="Gene3D" id="2.40.50.140">
    <property type="entry name" value="Nucleic acid-binding proteins"/>
    <property type="match status" value="1"/>
</dbReference>
<dbReference type="HAMAP" id="MF_00098">
    <property type="entry name" value="Met_tRNA_synth_type1"/>
    <property type="match status" value="1"/>
</dbReference>
<dbReference type="InterPro" id="IPR001412">
    <property type="entry name" value="aa-tRNA-synth_I_CS"/>
</dbReference>
<dbReference type="InterPro" id="IPR041872">
    <property type="entry name" value="Anticodon_Met"/>
</dbReference>
<dbReference type="InterPro" id="IPR023458">
    <property type="entry name" value="Met-tRNA_ligase_1"/>
</dbReference>
<dbReference type="InterPro" id="IPR014758">
    <property type="entry name" value="Met-tRNA_synth"/>
</dbReference>
<dbReference type="InterPro" id="IPR015413">
    <property type="entry name" value="Methionyl/Leucyl_tRNA_Synth"/>
</dbReference>
<dbReference type="InterPro" id="IPR033911">
    <property type="entry name" value="MetRS_core"/>
</dbReference>
<dbReference type="InterPro" id="IPR029038">
    <property type="entry name" value="MetRS_Zn"/>
</dbReference>
<dbReference type="InterPro" id="IPR012340">
    <property type="entry name" value="NA-bd_OB-fold"/>
</dbReference>
<dbReference type="InterPro" id="IPR014729">
    <property type="entry name" value="Rossmann-like_a/b/a_fold"/>
</dbReference>
<dbReference type="InterPro" id="IPR002547">
    <property type="entry name" value="tRNA-bd_dom"/>
</dbReference>
<dbReference type="InterPro" id="IPR009080">
    <property type="entry name" value="tRNAsynth_Ia_anticodon-bd"/>
</dbReference>
<dbReference type="NCBIfam" id="TIGR00398">
    <property type="entry name" value="metG"/>
    <property type="match status" value="1"/>
</dbReference>
<dbReference type="NCBIfam" id="NF001100">
    <property type="entry name" value="PRK00133.1"/>
    <property type="match status" value="1"/>
</dbReference>
<dbReference type="PANTHER" id="PTHR45765">
    <property type="entry name" value="METHIONINE--TRNA LIGASE"/>
    <property type="match status" value="1"/>
</dbReference>
<dbReference type="PANTHER" id="PTHR45765:SF1">
    <property type="entry name" value="METHIONINE--TRNA LIGASE, CYTOPLASMIC"/>
    <property type="match status" value="1"/>
</dbReference>
<dbReference type="Pfam" id="PF19303">
    <property type="entry name" value="Anticodon_3"/>
    <property type="match status" value="1"/>
</dbReference>
<dbReference type="Pfam" id="PF09334">
    <property type="entry name" value="tRNA-synt_1g"/>
    <property type="match status" value="1"/>
</dbReference>
<dbReference type="Pfam" id="PF01588">
    <property type="entry name" value="tRNA_bind"/>
    <property type="match status" value="1"/>
</dbReference>
<dbReference type="PRINTS" id="PR01041">
    <property type="entry name" value="TRNASYNTHMET"/>
</dbReference>
<dbReference type="SUPFAM" id="SSF47323">
    <property type="entry name" value="Anticodon-binding domain of a subclass of class I aminoacyl-tRNA synthetases"/>
    <property type="match status" value="1"/>
</dbReference>
<dbReference type="SUPFAM" id="SSF57770">
    <property type="entry name" value="Methionyl-tRNA synthetase (MetRS), Zn-domain"/>
    <property type="match status" value="1"/>
</dbReference>
<dbReference type="SUPFAM" id="SSF50249">
    <property type="entry name" value="Nucleic acid-binding proteins"/>
    <property type="match status" value="1"/>
</dbReference>
<dbReference type="SUPFAM" id="SSF52374">
    <property type="entry name" value="Nucleotidylyl transferase"/>
    <property type="match status" value="1"/>
</dbReference>
<dbReference type="PROSITE" id="PS00178">
    <property type="entry name" value="AA_TRNA_LIGASE_I"/>
    <property type="match status" value="1"/>
</dbReference>
<dbReference type="PROSITE" id="PS50886">
    <property type="entry name" value="TRBD"/>
    <property type="match status" value="1"/>
</dbReference>
<feature type="chain" id="PRO_0000139266" description="Methionine--tRNA ligase, cytoplasmic">
    <location>
        <begin position="1"/>
        <end position="797"/>
    </location>
</feature>
<feature type="domain" description="tRNA-binding" evidence="2">
    <location>
        <begin position="635"/>
        <end position="738"/>
    </location>
</feature>
<feature type="region of interest" description="Disordered" evidence="3">
    <location>
        <begin position="601"/>
        <end position="634"/>
    </location>
</feature>
<feature type="short sequence motif" description="'HIGH' region" evidence="4">
    <location>
        <begin position="26"/>
        <end position="36"/>
    </location>
</feature>
<feature type="short sequence motif" description="'KMSKS' region" evidence="4">
    <location>
        <begin position="348"/>
        <end position="352"/>
    </location>
</feature>
<feature type="binding site" evidence="1">
    <location>
        <position position="351"/>
    </location>
    <ligand>
        <name>ATP</name>
        <dbReference type="ChEBI" id="CHEBI:30616"/>
    </ligand>
</feature>
<comment type="catalytic activity">
    <reaction evidence="4">
        <text>tRNA(Met) + L-methionine + ATP = L-methionyl-tRNA(Met) + AMP + diphosphate</text>
        <dbReference type="Rhea" id="RHEA:13481"/>
        <dbReference type="Rhea" id="RHEA-COMP:9667"/>
        <dbReference type="Rhea" id="RHEA-COMP:9698"/>
        <dbReference type="ChEBI" id="CHEBI:30616"/>
        <dbReference type="ChEBI" id="CHEBI:33019"/>
        <dbReference type="ChEBI" id="CHEBI:57844"/>
        <dbReference type="ChEBI" id="CHEBI:78442"/>
        <dbReference type="ChEBI" id="CHEBI:78530"/>
        <dbReference type="ChEBI" id="CHEBI:456215"/>
        <dbReference type="EC" id="6.1.1.10"/>
    </reaction>
</comment>
<comment type="subcellular location">
    <subcellularLocation>
        <location evidence="5 6">Cytoplasm</location>
        <location evidence="5 6">Cytosol</location>
    </subcellularLocation>
</comment>
<comment type="similarity">
    <text evidence="4">Belongs to the class-I aminoacyl-tRNA synthetase family.</text>
</comment>
<keyword id="KW-0030">Aminoacyl-tRNA synthetase</keyword>
<keyword id="KW-0067">ATP-binding</keyword>
<keyword id="KW-0963">Cytoplasm</keyword>
<keyword id="KW-0436">Ligase</keyword>
<keyword id="KW-0547">Nucleotide-binding</keyword>
<keyword id="KW-0648">Protein biosynthesis</keyword>
<keyword id="KW-1185">Reference proteome</keyword>
<keyword id="KW-0694">RNA-binding</keyword>
<keyword id="KW-0820">tRNA-binding</keyword>
<proteinExistence type="evidence at transcript level"/>
<evidence type="ECO:0000250" key="1"/>
<evidence type="ECO:0000255" key="2">
    <source>
        <dbReference type="PROSITE-ProRule" id="PRU00209"/>
    </source>
</evidence>
<evidence type="ECO:0000256" key="3">
    <source>
        <dbReference type="SAM" id="MobiDB-lite"/>
    </source>
</evidence>
<evidence type="ECO:0000305" key="4"/>
<evidence type="ECO:0000305" key="5">
    <source>
    </source>
</evidence>
<evidence type="ECO:0000305" key="6">
    <source>
    </source>
</evidence>
<name>SYMC_ARATH</name>
<sequence length="797" mass="89854">MEDDGKSSPKLPIPGKRNILITSALPYVNNVPHLGNIIGCVLSADVYARYCRLRGYNAIYICGTDEYGTATETKALEENCTPKEICDKYHAIHKEVYDWFGISFDKFGRTSTPEQTEVCQAIFNKLWDNKWLSENTMQQLYCDTCKKFLADRLVEGSCPFEGCNYDSARGDQCEKCGKLLNPTELKDPKCKVCQNTPRIRDTDHLFIELPLLKDRLEAYIKKTSVTGSWSQNAIQTTNAWLRDGLRQRCITRDLKWGVPVPHEKYKDKVFYVWFDAPIGYVSITSCYTSEWEKWWKNPENVELYQFMGKDNVPFHTVMFPSTQLGTEENWTLMKTISVTEYLNYEDGKFSKSKGVGVFGNDVKDTNIPVEVWRYYLLTNRPEVSDTSFSWTDLQAKLNGELLSNLGNFVNRVLSFIAKPDNAGYGSVIPDAHDAESHSLTKSLAEKVEKFVAEYVEAMEKVKLKQGLKTAMLISSEGNYYLQASQFWKLYKEDKPLCAVVIRTAAGLVHLLAQLLEPFMPSFSCEVFKQLNLPPQFSLSDERGEVLLASRPWDILPPSHRIGTPQPLFKELENDEVARYREKFAGSQSDRRARDEAANLADQLNKTKLSDAKKQKASSKGGGKPKPQPAADREITMARLDIRVGKIVKAEKHPKADALYVEEIDVGGGEIRTVVSGLVKYIPLEEMQNRMVCVLCNLKPAKMRDIVSQAMVLAASSSDGSKVELVEPPKTANIGERVTFPGFEGEPDDVLNPKKKVWETLLVDLNTKENLVACYKDVPFTTSAGVCKVSSISNGTIR</sequence>
<organism>
    <name type="scientific">Arabidopsis thaliana</name>
    <name type="common">Mouse-ear cress</name>
    <dbReference type="NCBI Taxonomy" id="3702"/>
    <lineage>
        <taxon>Eukaryota</taxon>
        <taxon>Viridiplantae</taxon>
        <taxon>Streptophyta</taxon>
        <taxon>Embryophyta</taxon>
        <taxon>Tracheophyta</taxon>
        <taxon>Spermatophyta</taxon>
        <taxon>Magnoliopsida</taxon>
        <taxon>eudicotyledons</taxon>
        <taxon>Gunneridae</taxon>
        <taxon>Pentapetalae</taxon>
        <taxon>rosids</taxon>
        <taxon>malvids</taxon>
        <taxon>Brassicales</taxon>
        <taxon>Brassicaceae</taxon>
        <taxon>Camelineae</taxon>
        <taxon>Arabidopsis</taxon>
    </lineage>
</organism>
<reference key="1">
    <citation type="journal article" date="1999" name="Nature">
        <title>Sequence and analysis of chromosome 4 of the plant Arabidopsis thaliana.</title>
        <authorList>
            <person name="Mayer K.F.X."/>
            <person name="Schueller C."/>
            <person name="Wambutt R."/>
            <person name="Murphy G."/>
            <person name="Volckaert G."/>
            <person name="Pohl T."/>
            <person name="Duesterhoeft A."/>
            <person name="Stiekema W."/>
            <person name="Entian K.-D."/>
            <person name="Terryn N."/>
            <person name="Harris B."/>
            <person name="Ansorge W."/>
            <person name="Brandt P."/>
            <person name="Grivell L.A."/>
            <person name="Rieger M."/>
            <person name="Weichselgartner M."/>
            <person name="de Simone V."/>
            <person name="Obermaier B."/>
            <person name="Mache R."/>
            <person name="Mueller M."/>
            <person name="Kreis M."/>
            <person name="Delseny M."/>
            <person name="Puigdomenech P."/>
            <person name="Watson M."/>
            <person name="Schmidtheini T."/>
            <person name="Reichert B."/>
            <person name="Portetelle D."/>
            <person name="Perez-Alonso M."/>
            <person name="Boutry M."/>
            <person name="Bancroft I."/>
            <person name="Vos P."/>
            <person name="Hoheisel J."/>
            <person name="Zimmermann W."/>
            <person name="Wedler H."/>
            <person name="Ridley P."/>
            <person name="Langham S.-A."/>
            <person name="McCullagh B."/>
            <person name="Bilham L."/>
            <person name="Robben J."/>
            <person name="van der Schueren J."/>
            <person name="Grymonprez B."/>
            <person name="Chuang Y.-J."/>
            <person name="Vandenbussche F."/>
            <person name="Braeken M."/>
            <person name="Weltjens I."/>
            <person name="Voet M."/>
            <person name="Bastiaens I."/>
            <person name="Aert R."/>
            <person name="Defoor E."/>
            <person name="Weitzenegger T."/>
            <person name="Bothe G."/>
            <person name="Ramsperger U."/>
            <person name="Hilbert H."/>
            <person name="Braun M."/>
            <person name="Holzer E."/>
            <person name="Brandt A."/>
            <person name="Peters S."/>
            <person name="van Staveren M."/>
            <person name="Dirkse W."/>
            <person name="Mooijman P."/>
            <person name="Klein Lankhorst R."/>
            <person name="Rose M."/>
            <person name="Hauf J."/>
            <person name="Koetter P."/>
            <person name="Berneiser S."/>
            <person name="Hempel S."/>
            <person name="Feldpausch M."/>
            <person name="Lamberth S."/>
            <person name="Van den Daele H."/>
            <person name="De Keyser A."/>
            <person name="Buysshaert C."/>
            <person name="Gielen J."/>
            <person name="Villarroel R."/>
            <person name="De Clercq R."/>
            <person name="van Montagu M."/>
            <person name="Rogers J."/>
            <person name="Cronin A."/>
            <person name="Quail M.A."/>
            <person name="Bray-Allen S."/>
            <person name="Clark L."/>
            <person name="Doggett J."/>
            <person name="Hall S."/>
            <person name="Kay M."/>
            <person name="Lennard N."/>
            <person name="McLay K."/>
            <person name="Mayes R."/>
            <person name="Pettett A."/>
            <person name="Rajandream M.A."/>
            <person name="Lyne M."/>
            <person name="Benes V."/>
            <person name="Rechmann S."/>
            <person name="Borkova D."/>
            <person name="Bloecker H."/>
            <person name="Scharfe M."/>
            <person name="Grimm M."/>
            <person name="Loehnert T.-H."/>
            <person name="Dose S."/>
            <person name="de Haan M."/>
            <person name="Maarse A.C."/>
            <person name="Schaefer M."/>
            <person name="Mueller-Auer S."/>
            <person name="Gabel C."/>
            <person name="Fuchs M."/>
            <person name="Fartmann B."/>
            <person name="Granderath K."/>
            <person name="Dauner D."/>
            <person name="Herzl A."/>
            <person name="Neumann S."/>
            <person name="Argiriou A."/>
            <person name="Vitale D."/>
            <person name="Liguori R."/>
            <person name="Piravandi E."/>
            <person name="Massenet O."/>
            <person name="Quigley F."/>
            <person name="Clabauld G."/>
            <person name="Muendlein A."/>
            <person name="Felber R."/>
            <person name="Schnabl S."/>
            <person name="Hiller R."/>
            <person name="Schmidt W."/>
            <person name="Lecharny A."/>
            <person name="Aubourg S."/>
            <person name="Chefdor F."/>
            <person name="Cooke R."/>
            <person name="Berger C."/>
            <person name="Monfort A."/>
            <person name="Casacuberta E."/>
            <person name="Gibbons T."/>
            <person name="Weber N."/>
            <person name="Vandenbol M."/>
            <person name="Bargues M."/>
            <person name="Terol J."/>
            <person name="Torres A."/>
            <person name="Perez-Perez A."/>
            <person name="Purnelle B."/>
            <person name="Bent E."/>
            <person name="Johnson S."/>
            <person name="Tacon D."/>
            <person name="Jesse T."/>
            <person name="Heijnen L."/>
            <person name="Schwarz S."/>
            <person name="Scholler P."/>
            <person name="Heber S."/>
            <person name="Francs P."/>
            <person name="Bielke C."/>
            <person name="Frishman D."/>
            <person name="Haase D."/>
            <person name="Lemcke K."/>
            <person name="Mewes H.-W."/>
            <person name="Stocker S."/>
            <person name="Zaccaria P."/>
            <person name="Bevan M."/>
            <person name="Wilson R.K."/>
            <person name="de la Bastide M."/>
            <person name="Habermann K."/>
            <person name="Parnell L."/>
            <person name="Dedhia N."/>
            <person name="Gnoj L."/>
            <person name="Schutz K."/>
            <person name="Huang E."/>
            <person name="Spiegel L."/>
            <person name="Sekhon M."/>
            <person name="Murray J."/>
            <person name="Sheet P."/>
            <person name="Cordes M."/>
            <person name="Abu-Threideh J."/>
            <person name="Stoneking T."/>
            <person name="Kalicki J."/>
            <person name="Graves T."/>
            <person name="Harmon G."/>
            <person name="Edwards J."/>
            <person name="Latreille P."/>
            <person name="Courtney L."/>
            <person name="Cloud J."/>
            <person name="Abbott A."/>
            <person name="Scott K."/>
            <person name="Johnson D."/>
            <person name="Minx P."/>
            <person name="Bentley D."/>
            <person name="Fulton B."/>
            <person name="Miller N."/>
            <person name="Greco T."/>
            <person name="Kemp K."/>
            <person name="Kramer J."/>
            <person name="Fulton L."/>
            <person name="Mardis E."/>
            <person name="Dante M."/>
            <person name="Pepin K."/>
            <person name="Hillier L.W."/>
            <person name="Nelson J."/>
            <person name="Spieth J."/>
            <person name="Ryan E."/>
            <person name="Andrews S."/>
            <person name="Geisel C."/>
            <person name="Layman D."/>
            <person name="Du H."/>
            <person name="Ali J."/>
            <person name="Berghoff A."/>
            <person name="Jones K."/>
            <person name="Drone K."/>
            <person name="Cotton M."/>
            <person name="Joshu C."/>
            <person name="Antonoiu B."/>
            <person name="Zidanic M."/>
            <person name="Strong C."/>
            <person name="Sun H."/>
            <person name="Lamar B."/>
            <person name="Yordan C."/>
            <person name="Ma P."/>
            <person name="Zhong J."/>
            <person name="Preston R."/>
            <person name="Vil D."/>
            <person name="Shekher M."/>
            <person name="Matero A."/>
            <person name="Shah R."/>
            <person name="Swaby I.K."/>
            <person name="O'Shaughnessy A."/>
            <person name="Rodriguez M."/>
            <person name="Hoffman J."/>
            <person name="Till S."/>
            <person name="Granat S."/>
            <person name="Shohdy N."/>
            <person name="Hasegawa A."/>
            <person name="Hameed A."/>
            <person name="Lodhi M."/>
            <person name="Johnson A."/>
            <person name="Chen E."/>
            <person name="Marra M.A."/>
            <person name="Martienssen R."/>
            <person name="McCombie W.R."/>
        </authorList>
    </citation>
    <scope>NUCLEOTIDE SEQUENCE [LARGE SCALE GENOMIC DNA]</scope>
    <source>
        <strain>cv. Columbia</strain>
    </source>
</reference>
<reference key="2">
    <citation type="journal article" date="2017" name="Plant J.">
        <title>Araport11: a complete reannotation of the Arabidopsis thaliana reference genome.</title>
        <authorList>
            <person name="Cheng C.Y."/>
            <person name="Krishnakumar V."/>
            <person name="Chan A.P."/>
            <person name="Thibaud-Nissen F."/>
            <person name="Schobel S."/>
            <person name="Town C.D."/>
        </authorList>
    </citation>
    <scope>GENOME REANNOTATION</scope>
    <source>
        <strain>cv. Columbia</strain>
    </source>
</reference>
<reference key="3">
    <citation type="journal article" date="2003" name="Science">
        <title>Empirical analysis of transcriptional activity in the Arabidopsis genome.</title>
        <authorList>
            <person name="Yamada K."/>
            <person name="Lim J."/>
            <person name="Dale J.M."/>
            <person name="Chen H."/>
            <person name="Shinn P."/>
            <person name="Palm C.J."/>
            <person name="Southwick A.M."/>
            <person name="Wu H.C."/>
            <person name="Kim C.J."/>
            <person name="Nguyen M."/>
            <person name="Pham P.K."/>
            <person name="Cheuk R.F."/>
            <person name="Karlin-Newmann G."/>
            <person name="Liu S.X."/>
            <person name="Lam B."/>
            <person name="Sakano H."/>
            <person name="Wu T."/>
            <person name="Yu G."/>
            <person name="Miranda M."/>
            <person name="Quach H.L."/>
            <person name="Tripp M."/>
            <person name="Chang C.H."/>
            <person name="Lee J.M."/>
            <person name="Toriumi M.J."/>
            <person name="Chan M.M."/>
            <person name="Tang C.C."/>
            <person name="Onodera C.S."/>
            <person name="Deng J.M."/>
            <person name="Akiyama K."/>
            <person name="Ansari Y."/>
            <person name="Arakawa T."/>
            <person name="Banh J."/>
            <person name="Banno F."/>
            <person name="Bowser L."/>
            <person name="Brooks S.Y."/>
            <person name="Carninci P."/>
            <person name="Chao Q."/>
            <person name="Choy N."/>
            <person name="Enju A."/>
            <person name="Goldsmith A.D."/>
            <person name="Gurjal M."/>
            <person name="Hansen N.F."/>
            <person name="Hayashizaki Y."/>
            <person name="Johnson-Hopson C."/>
            <person name="Hsuan V.W."/>
            <person name="Iida K."/>
            <person name="Karnes M."/>
            <person name="Khan S."/>
            <person name="Koesema E."/>
            <person name="Ishida J."/>
            <person name="Jiang P.X."/>
            <person name="Jones T."/>
            <person name="Kawai J."/>
            <person name="Kamiya A."/>
            <person name="Meyers C."/>
            <person name="Nakajima M."/>
            <person name="Narusaka M."/>
            <person name="Seki M."/>
            <person name="Sakurai T."/>
            <person name="Satou M."/>
            <person name="Tamse R."/>
            <person name="Vaysberg M."/>
            <person name="Wallender E.K."/>
            <person name="Wong C."/>
            <person name="Yamamura Y."/>
            <person name="Yuan S."/>
            <person name="Shinozaki K."/>
            <person name="Davis R.W."/>
            <person name="Theologis A."/>
            <person name="Ecker J.R."/>
        </authorList>
    </citation>
    <scope>NUCLEOTIDE SEQUENCE [LARGE SCALE MRNA]</scope>
    <source>
        <strain>cv. Columbia</strain>
    </source>
</reference>
<reference key="4">
    <citation type="journal article" date="2005" name="Plant J.">
        <title>Requirement of aminoacyl-tRNA synthetases for gametogenesis and embryo development in Arabidopsis.</title>
        <authorList>
            <person name="Berg M."/>
            <person name="Rogers R."/>
            <person name="Muralla R."/>
            <person name="Meinke D."/>
        </authorList>
    </citation>
    <scope>SUBCELLULAR LOCATION</scope>
</reference>
<reference key="5">
    <citation type="journal article" date="2005" name="Proc. Natl. Acad. Sci. U.S.A.">
        <title>Dual targeting is the rule for organellar aminoacyl-tRNA synthetases in Arabidopsis thaliana.</title>
        <authorList>
            <person name="Duchene A.-M."/>
            <person name="Giritch A."/>
            <person name="Hoffmann B."/>
            <person name="Cognat V."/>
            <person name="Lancelin D."/>
            <person name="Peeters N.M."/>
            <person name="Zaepfel M."/>
            <person name="Marechal-Drouard L."/>
            <person name="Small I.D."/>
        </authorList>
    </citation>
    <scope>SUBCELLULAR LOCATION</scope>
</reference>
<accession>Q9SVN5</accession>